<name>HEM4_METJA</name>
<evidence type="ECO:0000250" key="1"/>
<evidence type="ECO:0000305" key="2"/>
<keyword id="KW-0456">Lyase</keyword>
<keyword id="KW-0627">Porphyrin biosynthesis</keyword>
<keyword id="KW-1185">Reference proteome</keyword>
<dbReference type="EC" id="4.2.1.75"/>
<dbReference type="EMBL" id="L77117">
    <property type="protein sequence ID" value="AAB98999.1"/>
    <property type="molecule type" value="Genomic_DNA"/>
</dbReference>
<dbReference type="PIR" id="B64424">
    <property type="entry name" value="B64424"/>
</dbReference>
<dbReference type="RefSeq" id="WP_010870508.1">
    <property type="nucleotide sequence ID" value="NC_000909.1"/>
</dbReference>
<dbReference type="SMR" id="Q58401"/>
<dbReference type="FunCoup" id="Q58401">
    <property type="interactions" value="110"/>
</dbReference>
<dbReference type="STRING" id="243232.MJ_0994"/>
<dbReference type="PaxDb" id="243232-MJ_0994"/>
<dbReference type="EnsemblBacteria" id="AAB98999">
    <property type="protein sequence ID" value="AAB98999"/>
    <property type="gene ID" value="MJ_0994"/>
</dbReference>
<dbReference type="GeneID" id="1451892"/>
<dbReference type="KEGG" id="mja:MJ_0994"/>
<dbReference type="eggNOG" id="arCOG02048">
    <property type="taxonomic scope" value="Archaea"/>
</dbReference>
<dbReference type="HOGENOM" id="CLU_011276_9_5_2"/>
<dbReference type="InParanoid" id="Q58401"/>
<dbReference type="OrthoDB" id="15395at2157"/>
<dbReference type="PhylomeDB" id="Q58401"/>
<dbReference type="UniPathway" id="UPA00251">
    <property type="reaction ID" value="UER00320"/>
</dbReference>
<dbReference type="Proteomes" id="UP000000805">
    <property type="component" value="Chromosome"/>
</dbReference>
<dbReference type="GO" id="GO:0004852">
    <property type="term" value="F:uroporphyrinogen-III synthase activity"/>
    <property type="evidence" value="ECO:0007669"/>
    <property type="project" value="UniProtKB-EC"/>
</dbReference>
<dbReference type="GO" id="GO:0006782">
    <property type="term" value="P:protoporphyrinogen IX biosynthetic process"/>
    <property type="evidence" value="ECO:0007669"/>
    <property type="project" value="UniProtKB-UniPathway"/>
</dbReference>
<dbReference type="GO" id="GO:0006780">
    <property type="term" value="P:uroporphyrinogen III biosynthetic process"/>
    <property type="evidence" value="ECO:0007669"/>
    <property type="project" value="InterPro"/>
</dbReference>
<dbReference type="CDD" id="cd06578">
    <property type="entry name" value="HemD"/>
    <property type="match status" value="1"/>
</dbReference>
<dbReference type="Gene3D" id="3.40.50.10090">
    <property type="match status" value="2"/>
</dbReference>
<dbReference type="InterPro" id="IPR036108">
    <property type="entry name" value="4pyrrol_syn_uPrphyn_synt_sf"/>
</dbReference>
<dbReference type="InterPro" id="IPR003754">
    <property type="entry name" value="4pyrrol_synth_uPrphyn_synth"/>
</dbReference>
<dbReference type="InterPro" id="IPR039793">
    <property type="entry name" value="UROS/Hem4"/>
</dbReference>
<dbReference type="PANTHER" id="PTHR38042">
    <property type="entry name" value="UROPORPHYRINOGEN-III SYNTHASE, CHLOROPLASTIC"/>
    <property type="match status" value="1"/>
</dbReference>
<dbReference type="PANTHER" id="PTHR38042:SF1">
    <property type="entry name" value="UROPORPHYRINOGEN-III SYNTHASE, CHLOROPLASTIC"/>
    <property type="match status" value="1"/>
</dbReference>
<dbReference type="Pfam" id="PF02602">
    <property type="entry name" value="HEM4"/>
    <property type="match status" value="1"/>
</dbReference>
<dbReference type="SUPFAM" id="SSF69618">
    <property type="entry name" value="HemD-like"/>
    <property type="match status" value="1"/>
</dbReference>
<proteinExistence type="inferred from homology"/>
<sequence>MKVVITRPKERADVFASLLKKEGFEPIIFPTLEIVYNKDLDVNLDSYDWIAFTSPSGVIGLYNILTENERENVKNKKIAVIGEKTAKTFKKYFGRDPDIMPNEYTAESLLREIKKVSKEEEKFLIPTTPSTRDVLKNNLNADLLFVYKSAEPENLKEDIKKLKELIAKDKFILTFTSGLTAKNFFKYVDDEFAEIIKDNYIVAIGPITAKVIEKFGFKPLIPKVYTIEGMLEVIRTLKER</sequence>
<gene>
    <name type="primary">hemD</name>
    <name type="ordered locus">MJ0994</name>
</gene>
<comment type="function">
    <text evidence="1">Catalyzes cyclization of the linear tetrapyrrole, hydroxymethylbilane, to the macrocyclic uroporphyrinogen III.</text>
</comment>
<comment type="catalytic activity">
    <reaction>
        <text>hydroxymethylbilane = uroporphyrinogen III + H2O</text>
        <dbReference type="Rhea" id="RHEA:18965"/>
        <dbReference type="ChEBI" id="CHEBI:15377"/>
        <dbReference type="ChEBI" id="CHEBI:57308"/>
        <dbReference type="ChEBI" id="CHEBI:57845"/>
        <dbReference type="EC" id="4.2.1.75"/>
    </reaction>
</comment>
<comment type="pathway">
    <text>Porphyrin-containing compound metabolism; protoporphyrin-IX biosynthesis; coproporphyrinogen-III from 5-aminolevulinate: step 3/4.</text>
</comment>
<comment type="similarity">
    <text evidence="2">Belongs to the uroporphyrinogen-III synthase family.</text>
</comment>
<reference key="1">
    <citation type="journal article" date="1996" name="Science">
        <title>Complete genome sequence of the methanogenic archaeon, Methanococcus jannaschii.</title>
        <authorList>
            <person name="Bult C.J."/>
            <person name="White O."/>
            <person name="Olsen G.J."/>
            <person name="Zhou L."/>
            <person name="Fleischmann R.D."/>
            <person name="Sutton G.G."/>
            <person name="Blake J.A."/>
            <person name="FitzGerald L.M."/>
            <person name="Clayton R.A."/>
            <person name="Gocayne J.D."/>
            <person name="Kerlavage A.R."/>
            <person name="Dougherty B.A."/>
            <person name="Tomb J.-F."/>
            <person name="Adams M.D."/>
            <person name="Reich C.I."/>
            <person name="Overbeek R."/>
            <person name="Kirkness E.F."/>
            <person name="Weinstock K.G."/>
            <person name="Merrick J.M."/>
            <person name="Glodek A."/>
            <person name="Scott J.L."/>
            <person name="Geoghagen N.S.M."/>
            <person name="Weidman J.F."/>
            <person name="Fuhrmann J.L."/>
            <person name="Nguyen D."/>
            <person name="Utterback T.R."/>
            <person name="Kelley J.M."/>
            <person name="Peterson J.D."/>
            <person name="Sadow P.W."/>
            <person name="Hanna M.C."/>
            <person name="Cotton M.D."/>
            <person name="Roberts K.M."/>
            <person name="Hurst M.A."/>
            <person name="Kaine B.P."/>
            <person name="Borodovsky M."/>
            <person name="Klenk H.-P."/>
            <person name="Fraser C.M."/>
            <person name="Smith H.O."/>
            <person name="Woese C.R."/>
            <person name="Venter J.C."/>
        </authorList>
    </citation>
    <scope>NUCLEOTIDE SEQUENCE [LARGE SCALE GENOMIC DNA]</scope>
    <source>
        <strain>ATCC 43067 / DSM 2661 / JAL-1 / JCM 10045 / NBRC 100440</strain>
    </source>
</reference>
<accession>Q58401</accession>
<protein>
    <recommendedName>
        <fullName>Putative uroporphyrinogen-III synthase</fullName>
        <shortName>UROS</shortName>
        <ecNumber>4.2.1.75</ecNumber>
    </recommendedName>
    <alternativeName>
        <fullName>Hydroxymethylbilane hydrolyase [cyclizing]</fullName>
    </alternativeName>
    <alternativeName>
        <fullName>Uroporphyrinogen-III cosynthase</fullName>
    </alternativeName>
</protein>
<organism>
    <name type="scientific">Methanocaldococcus jannaschii (strain ATCC 43067 / DSM 2661 / JAL-1 / JCM 10045 / NBRC 100440)</name>
    <name type="common">Methanococcus jannaschii</name>
    <dbReference type="NCBI Taxonomy" id="243232"/>
    <lineage>
        <taxon>Archaea</taxon>
        <taxon>Methanobacteriati</taxon>
        <taxon>Methanobacteriota</taxon>
        <taxon>Methanomada group</taxon>
        <taxon>Methanococci</taxon>
        <taxon>Methanococcales</taxon>
        <taxon>Methanocaldococcaceae</taxon>
        <taxon>Methanocaldococcus</taxon>
    </lineage>
</organism>
<feature type="chain" id="PRO_0000135249" description="Putative uroporphyrinogen-III synthase">
    <location>
        <begin position="1"/>
        <end position="240"/>
    </location>
</feature>